<keyword id="KW-0067">ATP-binding</keyword>
<keyword id="KW-0963">Cytoplasm</keyword>
<keyword id="KW-0235">DNA replication</keyword>
<keyword id="KW-0238">DNA-binding</keyword>
<keyword id="KW-0446">Lipid-binding</keyword>
<keyword id="KW-0547">Nucleotide-binding</keyword>
<organism>
    <name type="scientific">Vibrio vulnificus (strain CMCP6)</name>
    <dbReference type="NCBI Taxonomy" id="216895"/>
    <lineage>
        <taxon>Bacteria</taxon>
        <taxon>Pseudomonadati</taxon>
        <taxon>Pseudomonadota</taxon>
        <taxon>Gammaproteobacteria</taxon>
        <taxon>Vibrionales</taxon>
        <taxon>Vibrionaceae</taxon>
        <taxon>Vibrio</taxon>
    </lineage>
</organism>
<sequence length="468" mass="53084">MSSSLWLQCMQRLQEELPATEFSMWVRPLQAELNDNTLTLFAPNRFVLDWVRDKYLNSINRLLQEYCGHDIPNLRFEVGSRPVAAPKPAPTRTPADVAAESSAPAQLQARKPVHKTWDDDAQAIADINHRSNVNPKHKFNNFVEGKSNQLGLAAARQVADNPGGAYNPLFLYGGTGLGKTHLLHAVGNAIVDNKPNAKVVYMHSERFVQDMVKALQNNAIEEFKRYYRSVDALLIDDIQFFANKERSQEEFFHTFNALLEGNQQIILTSDRYPKEISGVEDRLKSRFGWGLTVAIEPPELETRVAILMKKAEDHQIHLADEVAFFIAKRLRSNVRELEGALNRVIANANFTGRPITIDFVREALRDLLALQEKLVTIDNIQKTVAEYYKIKVADLLSKRRSRSVARPRQLAMALAKELTNHSLPEIGDAFGGRDHTTVLHACRKIEQLREESHDIKEDYSNLIRTLSS</sequence>
<dbReference type="EMBL" id="AE016795">
    <property type="protein sequence ID" value="AAO09488.2"/>
    <property type="molecule type" value="Genomic_DNA"/>
</dbReference>
<dbReference type="RefSeq" id="WP_011079035.1">
    <property type="nucleotide sequence ID" value="NC_004459.3"/>
</dbReference>
<dbReference type="SMR" id="Q8DDI9"/>
<dbReference type="KEGG" id="vvu:VV1_0999"/>
<dbReference type="HOGENOM" id="CLU_026910_0_1_6"/>
<dbReference type="Proteomes" id="UP000002275">
    <property type="component" value="Chromosome 1"/>
</dbReference>
<dbReference type="GO" id="GO:0005737">
    <property type="term" value="C:cytoplasm"/>
    <property type="evidence" value="ECO:0007669"/>
    <property type="project" value="UniProtKB-SubCell"/>
</dbReference>
<dbReference type="GO" id="GO:0005886">
    <property type="term" value="C:plasma membrane"/>
    <property type="evidence" value="ECO:0007669"/>
    <property type="project" value="TreeGrafter"/>
</dbReference>
<dbReference type="GO" id="GO:0005524">
    <property type="term" value="F:ATP binding"/>
    <property type="evidence" value="ECO:0007669"/>
    <property type="project" value="UniProtKB-UniRule"/>
</dbReference>
<dbReference type="GO" id="GO:0016887">
    <property type="term" value="F:ATP hydrolysis activity"/>
    <property type="evidence" value="ECO:0007669"/>
    <property type="project" value="InterPro"/>
</dbReference>
<dbReference type="GO" id="GO:0003688">
    <property type="term" value="F:DNA replication origin binding"/>
    <property type="evidence" value="ECO:0007669"/>
    <property type="project" value="UniProtKB-UniRule"/>
</dbReference>
<dbReference type="GO" id="GO:0008289">
    <property type="term" value="F:lipid binding"/>
    <property type="evidence" value="ECO:0007669"/>
    <property type="project" value="UniProtKB-KW"/>
</dbReference>
<dbReference type="GO" id="GO:0006270">
    <property type="term" value="P:DNA replication initiation"/>
    <property type="evidence" value="ECO:0007669"/>
    <property type="project" value="UniProtKB-UniRule"/>
</dbReference>
<dbReference type="GO" id="GO:0006275">
    <property type="term" value="P:regulation of DNA replication"/>
    <property type="evidence" value="ECO:0007669"/>
    <property type="project" value="UniProtKB-UniRule"/>
</dbReference>
<dbReference type="CDD" id="cd00009">
    <property type="entry name" value="AAA"/>
    <property type="match status" value="1"/>
</dbReference>
<dbReference type="CDD" id="cd06571">
    <property type="entry name" value="Bac_DnaA_C"/>
    <property type="match status" value="1"/>
</dbReference>
<dbReference type="FunFam" id="1.10.1750.10:FF:000001">
    <property type="entry name" value="Chromosomal replication initiator protein DnaA"/>
    <property type="match status" value="1"/>
</dbReference>
<dbReference type="FunFam" id="1.10.8.60:FF:000003">
    <property type="entry name" value="Chromosomal replication initiator protein DnaA"/>
    <property type="match status" value="1"/>
</dbReference>
<dbReference type="FunFam" id="3.30.300.180:FF:000001">
    <property type="entry name" value="Chromosomal replication initiator protein DnaA"/>
    <property type="match status" value="1"/>
</dbReference>
<dbReference type="FunFam" id="3.40.50.300:FF:000103">
    <property type="entry name" value="Chromosomal replication initiator protein DnaA"/>
    <property type="match status" value="1"/>
</dbReference>
<dbReference type="Gene3D" id="1.10.1750.10">
    <property type="match status" value="1"/>
</dbReference>
<dbReference type="Gene3D" id="1.10.8.60">
    <property type="match status" value="1"/>
</dbReference>
<dbReference type="Gene3D" id="3.30.300.180">
    <property type="match status" value="1"/>
</dbReference>
<dbReference type="Gene3D" id="3.40.50.300">
    <property type="entry name" value="P-loop containing nucleotide triphosphate hydrolases"/>
    <property type="match status" value="1"/>
</dbReference>
<dbReference type="HAMAP" id="MF_00377">
    <property type="entry name" value="DnaA_bact"/>
    <property type="match status" value="1"/>
</dbReference>
<dbReference type="InterPro" id="IPR003593">
    <property type="entry name" value="AAA+_ATPase"/>
</dbReference>
<dbReference type="InterPro" id="IPR001957">
    <property type="entry name" value="Chromosome_initiator_DnaA"/>
</dbReference>
<dbReference type="InterPro" id="IPR020591">
    <property type="entry name" value="Chromosome_initiator_DnaA-like"/>
</dbReference>
<dbReference type="InterPro" id="IPR018312">
    <property type="entry name" value="Chromosome_initiator_DnaA_CS"/>
</dbReference>
<dbReference type="InterPro" id="IPR013159">
    <property type="entry name" value="DnaA_C"/>
</dbReference>
<dbReference type="InterPro" id="IPR013317">
    <property type="entry name" value="DnaA_dom"/>
</dbReference>
<dbReference type="InterPro" id="IPR024633">
    <property type="entry name" value="DnaA_N_dom"/>
</dbReference>
<dbReference type="InterPro" id="IPR038454">
    <property type="entry name" value="DnaA_N_sf"/>
</dbReference>
<dbReference type="InterPro" id="IPR055199">
    <property type="entry name" value="Hda_lid"/>
</dbReference>
<dbReference type="InterPro" id="IPR027417">
    <property type="entry name" value="P-loop_NTPase"/>
</dbReference>
<dbReference type="InterPro" id="IPR010921">
    <property type="entry name" value="Trp_repressor/repl_initiator"/>
</dbReference>
<dbReference type="NCBIfam" id="TIGR00362">
    <property type="entry name" value="DnaA"/>
    <property type="match status" value="1"/>
</dbReference>
<dbReference type="PANTHER" id="PTHR30050">
    <property type="entry name" value="CHROMOSOMAL REPLICATION INITIATOR PROTEIN DNAA"/>
    <property type="match status" value="1"/>
</dbReference>
<dbReference type="PANTHER" id="PTHR30050:SF2">
    <property type="entry name" value="CHROMOSOMAL REPLICATION INITIATOR PROTEIN DNAA"/>
    <property type="match status" value="1"/>
</dbReference>
<dbReference type="Pfam" id="PF00308">
    <property type="entry name" value="Bac_DnaA"/>
    <property type="match status" value="1"/>
</dbReference>
<dbReference type="Pfam" id="PF08299">
    <property type="entry name" value="Bac_DnaA_C"/>
    <property type="match status" value="1"/>
</dbReference>
<dbReference type="Pfam" id="PF11638">
    <property type="entry name" value="DnaA_N"/>
    <property type="match status" value="1"/>
</dbReference>
<dbReference type="Pfam" id="PF22688">
    <property type="entry name" value="Hda_lid"/>
    <property type="match status" value="1"/>
</dbReference>
<dbReference type="PRINTS" id="PR00051">
    <property type="entry name" value="DNAA"/>
</dbReference>
<dbReference type="SMART" id="SM00382">
    <property type="entry name" value="AAA"/>
    <property type="match status" value="1"/>
</dbReference>
<dbReference type="SMART" id="SM00760">
    <property type="entry name" value="Bac_DnaA_C"/>
    <property type="match status" value="1"/>
</dbReference>
<dbReference type="SUPFAM" id="SSF52540">
    <property type="entry name" value="P-loop containing nucleoside triphosphate hydrolases"/>
    <property type="match status" value="1"/>
</dbReference>
<dbReference type="SUPFAM" id="SSF48295">
    <property type="entry name" value="TrpR-like"/>
    <property type="match status" value="1"/>
</dbReference>
<dbReference type="PROSITE" id="PS01008">
    <property type="entry name" value="DNAA"/>
    <property type="match status" value="1"/>
</dbReference>
<comment type="function">
    <text evidence="1">Plays an essential role in the initiation and regulation of chromosomal replication. ATP-DnaA binds to the origin of replication (oriC) to initiate formation of the DNA replication initiation complex once per cell cycle. Binds the DnaA box (a 9 base pair repeat at the origin) and separates the double-stranded (ds)DNA. Forms a right-handed helical filament on oriC DNA; dsDNA binds to the exterior of the filament while single-stranded (ss)DNA is stabiized in the filament's interior. The ATP-DnaA-oriC complex binds and stabilizes one strand of the AT-rich DNA unwinding element (DUE), permitting loading of DNA polymerase. After initiation quickly degrades to an ADP-DnaA complex that is not apt for DNA replication. Binds acidic phospholipids.</text>
</comment>
<comment type="subunit">
    <text evidence="1">Oligomerizes as a right-handed, spiral filament on DNA at oriC.</text>
</comment>
<comment type="subcellular location">
    <subcellularLocation>
        <location evidence="1">Cytoplasm</location>
    </subcellularLocation>
</comment>
<comment type="domain">
    <text evidence="1">Domain I is involved in oligomerization and binding regulators, domain II is flexibile and of varying length in different bacteria, domain III forms the AAA+ region, while domain IV binds dsDNA.</text>
</comment>
<comment type="similarity">
    <text evidence="1">Belongs to the DnaA family.</text>
</comment>
<proteinExistence type="inferred from homology"/>
<reference key="1">
    <citation type="submission" date="2002-12" db="EMBL/GenBank/DDBJ databases">
        <title>Complete genome sequence of Vibrio vulnificus CMCP6.</title>
        <authorList>
            <person name="Rhee J.H."/>
            <person name="Kim S.Y."/>
            <person name="Chung S.S."/>
            <person name="Kim J.J."/>
            <person name="Moon Y.H."/>
            <person name="Jeong H."/>
            <person name="Choy H.E."/>
        </authorList>
    </citation>
    <scope>NUCLEOTIDE SEQUENCE [LARGE SCALE GENOMIC DNA]</scope>
    <source>
        <strain>CMCP6</strain>
    </source>
</reference>
<protein>
    <recommendedName>
        <fullName evidence="1">Chromosomal replication initiator protein DnaA</fullName>
    </recommendedName>
</protein>
<accession>Q8DDI9</accession>
<feature type="chain" id="PRO_0000114299" description="Chromosomal replication initiator protein DnaA">
    <location>
        <begin position="1"/>
        <end position="468"/>
    </location>
</feature>
<feature type="region of interest" description="Domain I, interacts with DnaA modulators" evidence="1">
    <location>
        <begin position="1"/>
        <end position="84"/>
    </location>
</feature>
<feature type="region of interest" description="Disordered" evidence="2">
    <location>
        <begin position="81"/>
        <end position="113"/>
    </location>
</feature>
<feature type="region of interest" description="Domain II" evidence="1">
    <location>
        <begin position="84"/>
        <end position="131"/>
    </location>
</feature>
<feature type="region of interest" description="Domain III, AAA+ region" evidence="1">
    <location>
        <begin position="132"/>
        <end position="348"/>
    </location>
</feature>
<feature type="region of interest" description="Domain IV, binds dsDNA" evidence="1">
    <location>
        <begin position="349"/>
        <end position="468"/>
    </location>
</feature>
<feature type="binding site" evidence="1">
    <location>
        <position position="176"/>
    </location>
    <ligand>
        <name>ATP</name>
        <dbReference type="ChEBI" id="CHEBI:30616"/>
    </ligand>
</feature>
<feature type="binding site" evidence="1">
    <location>
        <position position="178"/>
    </location>
    <ligand>
        <name>ATP</name>
        <dbReference type="ChEBI" id="CHEBI:30616"/>
    </ligand>
</feature>
<feature type="binding site" evidence="1">
    <location>
        <position position="179"/>
    </location>
    <ligand>
        <name>ATP</name>
        <dbReference type="ChEBI" id="CHEBI:30616"/>
    </ligand>
</feature>
<feature type="binding site" evidence="1">
    <location>
        <position position="180"/>
    </location>
    <ligand>
        <name>ATP</name>
        <dbReference type="ChEBI" id="CHEBI:30616"/>
    </ligand>
</feature>
<evidence type="ECO:0000255" key="1">
    <source>
        <dbReference type="HAMAP-Rule" id="MF_00377"/>
    </source>
</evidence>
<evidence type="ECO:0000256" key="2">
    <source>
        <dbReference type="SAM" id="MobiDB-lite"/>
    </source>
</evidence>
<gene>
    <name evidence="1" type="primary">dnaA</name>
    <name type="ordered locus">VV1_0999</name>
</gene>
<name>DNAA_VIBVU</name>